<name>T4HR_ZYMTI</name>
<organism>
    <name type="scientific">Zymoseptoria tritici (strain CBS 115943 / IPO323)</name>
    <name type="common">Speckled leaf blotch fungus</name>
    <name type="synonym">Septoria tritici</name>
    <dbReference type="NCBI Taxonomy" id="336722"/>
    <lineage>
        <taxon>Eukaryota</taxon>
        <taxon>Fungi</taxon>
        <taxon>Dikarya</taxon>
        <taxon>Ascomycota</taxon>
        <taxon>Pezizomycotina</taxon>
        <taxon>Dothideomycetes</taxon>
        <taxon>Dothideomycetidae</taxon>
        <taxon>Mycosphaerellales</taxon>
        <taxon>Mycosphaerellaceae</taxon>
        <taxon>Zymoseptoria</taxon>
    </lineage>
</organism>
<comment type="function">
    <text evidence="3 5">Probable tetrahydroxynaphthalene reductase; part of the gene cluster 29 that mediates the biosynthesis dihydroxynaphthalene (DHN)-melanin, a bluish-green pigment and a structural component of the conidial wall (PubMed:28818040). Catalyzes the NADPH-dependent reduction of 1,3,6,8-tetrahydroxynaphthalene (T4HN) into (+)-scytalone (By similarity).</text>
</comment>
<comment type="catalytic activity">
    <reaction evidence="3">
        <text>scytalone + NADP(+) = naphthalene-1,3,6,8-tetrol + NADPH + H(+)</text>
        <dbReference type="Rhea" id="RHEA:21908"/>
        <dbReference type="ChEBI" id="CHEBI:15378"/>
        <dbReference type="ChEBI" id="CHEBI:16945"/>
        <dbReference type="ChEBI" id="CHEBI:18365"/>
        <dbReference type="ChEBI" id="CHEBI:57783"/>
        <dbReference type="ChEBI" id="CHEBI:58349"/>
        <dbReference type="EC" id="1.1.1.252"/>
    </reaction>
    <physiologicalReaction direction="right-to-left" evidence="3">
        <dbReference type="Rhea" id="RHEA:21910"/>
    </physiologicalReaction>
</comment>
<comment type="pathway">
    <text evidence="8">Pigment biosynthesis; melanin biosynthesis.</text>
</comment>
<comment type="subunit">
    <text evidence="3">Homotetramer.</text>
</comment>
<comment type="similarity">
    <text evidence="7">Belongs to the short-chain dehydrogenases/reductases (SDR) family.</text>
</comment>
<reference key="1">
    <citation type="journal article" date="2011" name="PLoS Genet.">
        <title>Finished genome of the fungal wheat pathogen Mycosphaerella graminicola reveals dispensome structure, chromosome plasticity, and stealth pathogenesis.</title>
        <authorList>
            <person name="Goodwin S.B."/>
            <person name="Ben M'barek S."/>
            <person name="Dhillon B."/>
            <person name="Wittenberg A.H.J."/>
            <person name="Crane C.F."/>
            <person name="Hane J.K."/>
            <person name="Foster A.J."/>
            <person name="Van der Lee T.A.J."/>
            <person name="Grimwood J."/>
            <person name="Aerts A."/>
            <person name="Antoniw J."/>
            <person name="Bailey A."/>
            <person name="Bluhm B."/>
            <person name="Bowler J."/>
            <person name="Bristow J."/>
            <person name="van der Burgt A."/>
            <person name="Canto-Canche B."/>
            <person name="Churchill A.C.L."/>
            <person name="Conde-Ferraez L."/>
            <person name="Cools H.J."/>
            <person name="Coutinho P.M."/>
            <person name="Csukai M."/>
            <person name="Dehal P."/>
            <person name="De Wit P."/>
            <person name="Donzelli B."/>
            <person name="van de Geest H.C."/>
            <person name="van Ham R.C.H.J."/>
            <person name="Hammond-Kosack K.E."/>
            <person name="Henrissat B."/>
            <person name="Kilian A."/>
            <person name="Kobayashi A.K."/>
            <person name="Koopmann E."/>
            <person name="Kourmpetis Y."/>
            <person name="Kuzniar A."/>
            <person name="Lindquist E."/>
            <person name="Lombard V."/>
            <person name="Maliepaard C."/>
            <person name="Martins N."/>
            <person name="Mehrabi R."/>
            <person name="Nap J.P.H."/>
            <person name="Ponomarenko A."/>
            <person name="Rudd J.J."/>
            <person name="Salamov A."/>
            <person name="Schmutz J."/>
            <person name="Schouten H.J."/>
            <person name="Shapiro H."/>
            <person name="Stergiopoulos I."/>
            <person name="Torriani S.F.F."/>
            <person name="Tu H."/>
            <person name="de Vries R.P."/>
            <person name="Waalwijk C."/>
            <person name="Ware S.B."/>
            <person name="Wiebenga A."/>
            <person name="Zwiers L.-H."/>
            <person name="Oliver R.P."/>
            <person name="Grigoriev I.V."/>
            <person name="Kema G.H.J."/>
        </authorList>
    </citation>
    <scope>NUCLEOTIDE SEQUENCE [LARGE SCALE GENOMIC DNA]</scope>
    <source>
        <strain>CBS 115943 / IPO323</strain>
    </source>
</reference>
<reference key="2">
    <citation type="journal article" date="2017" name="BMC Genomics">
        <title>In silico prediction and characterization of secondary metabolite biosynthetic gene clusters in the wheat pathogen Zymoseptoria tritici.</title>
        <authorList>
            <person name="Cairns T."/>
            <person name="Meyer V."/>
        </authorList>
    </citation>
    <scope>FUNCTION</scope>
    <scope>PATHWAY</scope>
</reference>
<protein>
    <recommendedName>
        <fullName evidence="6">Probable tetrahydroxynaphthalene reductase MYCGRDRAFT_87994</fullName>
        <ecNumber evidence="3">1.1.1.252</ecNumber>
    </recommendedName>
    <alternativeName>
        <fullName evidence="6">Conidial pigment biosynthesis cluster 29 protein MYCGRDRAFT_87994</fullName>
    </alternativeName>
</protein>
<evidence type="ECO:0000250" key="1">
    <source>
        <dbReference type="UniProtKB" id="L0E2Z4"/>
    </source>
</evidence>
<evidence type="ECO:0000250" key="2">
    <source>
        <dbReference type="UniProtKB" id="O93868"/>
    </source>
</evidence>
<evidence type="ECO:0000250" key="3">
    <source>
        <dbReference type="UniProtKB" id="Q12634"/>
    </source>
</evidence>
<evidence type="ECO:0000255" key="4">
    <source>
        <dbReference type="PROSITE-ProRule" id="PRU10001"/>
    </source>
</evidence>
<evidence type="ECO:0000269" key="5">
    <source>
    </source>
</evidence>
<evidence type="ECO:0000303" key="6">
    <source>
    </source>
</evidence>
<evidence type="ECO:0000305" key="7"/>
<evidence type="ECO:0000305" key="8">
    <source>
    </source>
</evidence>
<keyword id="KW-0470">Melanin biosynthesis</keyword>
<keyword id="KW-0521">NADP</keyword>
<keyword id="KW-0560">Oxidoreductase</keyword>
<keyword id="KW-1185">Reference proteome</keyword>
<sequence length="267" mass="28465">MAVTPYVDTSRLDGKVALVTGSGRGIGAAMAIHLANRGAKVVVNYANSVEAANKVVDEIKSRGGEAIALQADVGEVSQTTKLMDDAVAHFGQLDIVCSNSGVVSFGHLKDVTEEEYDRVFRINTRGQFFVAREAYKHLSVGGRIIMMGSITGQAKGVPKHAVYSASKGAIETFVRCMAIDCGDKKITVNAVAPGGIKTDMYHAVCKEYIPNGENLTDEEVDEYAKTWSPMDRVGQPMDIAKVVGFLASEDGEWINGKVIGIDGAACM</sequence>
<accession>F9XMW6</accession>
<dbReference type="EC" id="1.1.1.252" evidence="3"/>
<dbReference type="EMBL" id="CM001206">
    <property type="protein sequence ID" value="EGP83311.1"/>
    <property type="molecule type" value="Genomic_DNA"/>
</dbReference>
<dbReference type="RefSeq" id="XP_003848335.1">
    <property type="nucleotide sequence ID" value="XM_003848287.1"/>
</dbReference>
<dbReference type="SMR" id="F9XMW6"/>
<dbReference type="EnsemblFungi" id="Mycgr3T87994">
    <property type="protein sequence ID" value="Mycgr3P87994"/>
    <property type="gene ID" value="Mycgr3G87994"/>
</dbReference>
<dbReference type="GeneID" id="13396131"/>
<dbReference type="KEGG" id="ztr:MYCGRDRAFT_87994"/>
<dbReference type="eggNOG" id="KOG0725">
    <property type="taxonomic scope" value="Eukaryota"/>
</dbReference>
<dbReference type="HOGENOM" id="CLU_010194_1_3_1"/>
<dbReference type="InParanoid" id="F9XMW6"/>
<dbReference type="OMA" id="EYACTWS"/>
<dbReference type="OrthoDB" id="47007at2759"/>
<dbReference type="UniPathway" id="UPA00785"/>
<dbReference type="Proteomes" id="UP000008062">
    <property type="component" value="Chromosome 11"/>
</dbReference>
<dbReference type="GO" id="GO:0047039">
    <property type="term" value="F:tetrahydroxynaphthalene reductase activity"/>
    <property type="evidence" value="ECO:0007669"/>
    <property type="project" value="UniProtKB-EC"/>
</dbReference>
<dbReference type="GO" id="GO:0042438">
    <property type="term" value="P:melanin biosynthetic process"/>
    <property type="evidence" value="ECO:0007669"/>
    <property type="project" value="UniProtKB-UniPathway"/>
</dbReference>
<dbReference type="CDD" id="cd05362">
    <property type="entry name" value="THN_reductase-like_SDR_c"/>
    <property type="match status" value="1"/>
</dbReference>
<dbReference type="FunFam" id="3.40.50.720:FF:000084">
    <property type="entry name" value="Short-chain dehydrogenase reductase"/>
    <property type="match status" value="1"/>
</dbReference>
<dbReference type="Gene3D" id="3.40.50.720">
    <property type="entry name" value="NAD(P)-binding Rossmann-like Domain"/>
    <property type="match status" value="1"/>
</dbReference>
<dbReference type="InterPro" id="IPR036291">
    <property type="entry name" value="NAD(P)-bd_dom_sf"/>
</dbReference>
<dbReference type="InterPro" id="IPR020904">
    <property type="entry name" value="Sc_DH/Rdtase_CS"/>
</dbReference>
<dbReference type="InterPro" id="IPR002347">
    <property type="entry name" value="SDR_fam"/>
</dbReference>
<dbReference type="PANTHER" id="PTHR48107">
    <property type="entry name" value="NADPH-DEPENDENT ALDEHYDE REDUCTASE-LIKE PROTEIN, CHLOROPLASTIC-RELATED"/>
    <property type="match status" value="1"/>
</dbReference>
<dbReference type="PANTHER" id="PTHR48107:SF7">
    <property type="entry name" value="RE15974P"/>
    <property type="match status" value="1"/>
</dbReference>
<dbReference type="Pfam" id="PF13561">
    <property type="entry name" value="adh_short_C2"/>
    <property type="match status" value="1"/>
</dbReference>
<dbReference type="PRINTS" id="PR00081">
    <property type="entry name" value="GDHRDH"/>
</dbReference>
<dbReference type="PRINTS" id="PR00080">
    <property type="entry name" value="SDRFAMILY"/>
</dbReference>
<dbReference type="SUPFAM" id="SSF51735">
    <property type="entry name" value="NAD(P)-binding Rossmann-fold domains"/>
    <property type="match status" value="1"/>
</dbReference>
<dbReference type="PROSITE" id="PS00061">
    <property type="entry name" value="ADH_SHORT"/>
    <property type="match status" value="1"/>
</dbReference>
<proteinExistence type="inferred from homology"/>
<feature type="chain" id="PRO_0000451091" description="Probable tetrahydroxynaphthalene reductase MYCGRDRAFT_87994">
    <location>
        <begin position="1"/>
        <end position="267"/>
    </location>
</feature>
<feature type="active site" description="Proton donor" evidence="2">
    <location>
        <position position="149"/>
    </location>
</feature>
<feature type="active site" description="Proton acceptor" evidence="4">
    <location>
        <position position="163"/>
    </location>
</feature>
<feature type="active site" description="Lowers pKa of active site Tyr" evidence="2">
    <location>
        <position position="167"/>
    </location>
</feature>
<feature type="binding site" evidence="1">
    <location>
        <position position="26"/>
    </location>
    <ligand>
        <name>NADP(+)</name>
        <dbReference type="ChEBI" id="CHEBI:58349"/>
    </ligand>
</feature>
<feature type="binding site" evidence="1">
    <location>
        <position position="72"/>
    </location>
    <ligand>
        <name>NADP(+)</name>
        <dbReference type="ChEBI" id="CHEBI:58349"/>
    </ligand>
</feature>
<feature type="binding site" evidence="2">
    <location>
        <position position="99"/>
    </location>
    <ligand>
        <name>NADP(+)</name>
        <dbReference type="ChEBI" id="CHEBI:58349"/>
    </ligand>
</feature>
<feature type="binding site" evidence="1">
    <location>
        <position position="132"/>
    </location>
    <ligand>
        <name>NADP(+)</name>
        <dbReference type="ChEBI" id="CHEBI:58349"/>
    </ligand>
</feature>
<feature type="binding site" evidence="2">
    <location>
        <position position="163"/>
    </location>
    <ligand>
        <name>NADP(+)</name>
        <dbReference type="ChEBI" id="CHEBI:58349"/>
    </ligand>
</feature>
<feature type="binding site" evidence="2">
    <location>
        <position position="167"/>
    </location>
    <ligand>
        <name>NADP(+)</name>
        <dbReference type="ChEBI" id="CHEBI:58349"/>
    </ligand>
</feature>
<feature type="binding site" evidence="2">
    <location>
        <position position="196"/>
    </location>
    <ligand>
        <name>NADP(+)</name>
        <dbReference type="ChEBI" id="CHEBI:58349"/>
    </ligand>
</feature>
<feature type="binding site" evidence="1">
    <location>
        <position position="198"/>
    </location>
    <ligand>
        <name>NADP(+)</name>
        <dbReference type="ChEBI" id="CHEBI:58349"/>
    </ligand>
</feature>
<gene>
    <name type="ORF">MYCGRDRAFT_87994</name>
</gene>